<proteinExistence type="inferred from homology"/>
<feature type="chain" id="PRO_1000212470" description="UPF0250 protein YbeD">
    <location>
        <begin position="1"/>
        <end position="87"/>
    </location>
</feature>
<dbReference type="EMBL" id="CP001396">
    <property type="protein sequence ID" value="ACR62278.1"/>
    <property type="molecule type" value="Genomic_DNA"/>
</dbReference>
<dbReference type="RefSeq" id="WP_000850550.1">
    <property type="nucleotide sequence ID" value="NC_012759.1"/>
</dbReference>
<dbReference type="SMR" id="C4ZWB8"/>
<dbReference type="GeneID" id="93776851"/>
<dbReference type="KEGG" id="ebw:BWG_0502"/>
<dbReference type="HOGENOM" id="CLU_161438_2_1_6"/>
<dbReference type="GO" id="GO:0005829">
    <property type="term" value="C:cytosol"/>
    <property type="evidence" value="ECO:0007669"/>
    <property type="project" value="TreeGrafter"/>
</dbReference>
<dbReference type="FunFam" id="3.30.70.260:FF:000002">
    <property type="entry name" value="UPF0250 protein YbeD"/>
    <property type="match status" value="1"/>
</dbReference>
<dbReference type="Gene3D" id="3.30.70.260">
    <property type="match status" value="1"/>
</dbReference>
<dbReference type="HAMAP" id="MF_00659">
    <property type="entry name" value="UPF0250"/>
    <property type="match status" value="1"/>
</dbReference>
<dbReference type="InterPro" id="IPR007454">
    <property type="entry name" value="UPF0250_YbeD-like"/>
</dbReference>
<dbReference type="InterPro" id="IPR027471">
    <property type="entry name" value="YbeD-like_sf"/>
</dbReference>
<dbReference type="NCBIfam" id="NF003447">
    <property type="entry name" value="PRK04998.1"/>
    <property type="match status" value="1"/>
</dbReference>
<dbReference type="PANTHER" id="PTHR38036">
    <property type="entry name" value="UPF0250 PROTEIN YBED"/>
    <property type="match status" value="1"/>
</dbReference>
<dbReference type="PANTHER" id="PTHR38036:SF1">
    <property type="entry name" value="UPF0250 PROTEIN YBED"/>
    <property type="match status" value="1"/>
</dbReference>
<dbReference type="Pfam" id="PF04359">
    <property type="entry name" value="DUF493"/>
    <property type="match status" value="1"/>
</dbReference>
<dbReference type="SUPFAM" id="SSF117991">
    <property type="entry name" value="YbeD/HP0495-like"/>
    <property type="match status" value="1"/>
</dbReference>
<sequence>MKTKLNELLEFPTPFTYKVMGQALPELVDQVVEVVQRHAPGDYTPTVKPSSKGNYHSVSITINATHIEQVETLYEELGKIDIVRMVL</sequence>
<protein>
    <recommendedName>
        <fullName evidence="1">UPF0250 protein YbeD</fullName>
    </recommendedName>
</protein>
<name>YBED_ECOBW</name>
<organism>
    <name type="scientific">Escherichia coli (strain K12 / MC4100 / BW2952)</name>
    <dbReference type="NCBI Taxonomy" id="595496"/>
    <lineage>
        <taxon>Bacteria</taxon>
        <taxon>Pseudomonadati</taxon>
        <taxon>Pseudomonadota</taxon>
        <taxon>Gammaproteobacteria</taxon>
        <taxon>Enterobacterales</taxon>
        <taxon>Enterobacteriaceae</taxon>
        <taxon>Escherichia</taxon>
    </lineage>
</organism>
<gene>
    <name evidence="1" type="primary">ybeD</name>
    <name type="ordered locus">BWG_0502</name>
</gene>
<reference key="1">
    <citation type="journal article" date="2009" name="J. Bacteriol.">
        <title>Genomic sequencing reveals regulatory mutations and recombinational events in the widely used MC4100 lineage of Escherichia coli K-12.</title>
        <authorList>
            <person name="Ferenci T."/>
            <person name="Zhou Z."/>
            <person name="Betteridge T."/>
            <person name="Ren Y."/>
            <person name="Liu Y."/>
            <person name="Feng L."/>
            <person name="Reeves P.R."/>
            <person name="Wang L."/>
        </authorList>
    </citation>
    <scope>NUCLEOTIDE SEQUENCE [LARGE SCALE GENOMIC DNA]</scope>
    <source>
        <strain>K12 / MC4100 / BW2952</strain>
    </source>
</reference>
<comment type="similarity">
    <text evidence="1">Belongs to the UPF0250 family.</text>
</comment>
<accession>C4ZWB8</accession>
<evidence type="ECO:0000255" key="1">
    <source>
        <dbReference type="HAMAP-Rule" id="MF_00659"/>
    </source>
</evidence>